<evidence type="ECO:0000255" key="1">
    <source>
        <dbReference type="HAMAP-Rule" id="MF_01448"/>
    </source>
</evidence>
<dbReference type="EMBL" id="AM263198">
    <property type="protein sequence ID" value="CAK20932.1"/>
    <property type="molecule type" value="Genomic_DNA"/>
</dbReference>
<dbReference type="RefSeq" id="WP_011702304.1">
    <property type="nucleotide sequence ID" value="NC_008555.1"/>
</dbReference>
<dbReference type="STRING" id="386043.lwe1514"/>
<dbReference type="GeneID" id="61189390"/>
<dbReference type="KEGG" id="lwe:lwe1514"/>
<dbReference type="eggNOG" id="COG3906">
    <property type="taxonomic scope" value="Bacteria"/>
</dbReference>
<dbReference type="HOGENOM" id="CLU_146610_2_1_9"/>
<dbReference type="OrthoDB" id="2086132at2"/>
<dbReference type="Proteomes" id="UP000000779">
    <property type="component" value="Chromosome"/>
</dbReference>
<dbReference type="HAMAP" id="MF_01448">
    <property type="entry name" value="UPF0473"/>
    <property type="match status" value="1"/>
</dbReference>
<dbReference type="InterPro" id="IPR009711">
    <property type="entry name" value="UPF0473"/>
</dbReference>
<dbReference type="NCBIfam" id="NF010217">
    <property type="entry name" value="PRK13678.1-4"/>
    <property type="match status" value="1"/>
</dbReference>
<dbReference type="PANTHER" id="PTHR40066">
    <property type="entry name" value="UPF0473 PROTEIN CBO2561/CLC_2432"/>
    <property type="match status" value="1"/>
</dbReference>
<dbReference type="PANTHER" id="PTHR40066:SF1">
    <property type="entry name" value="UPF0473 PROTEIN CBO2561_CLC_2432"/>
    <property type="match status" value="1"/>
</dbReference>
<dbReference type="Pfam" id="PF06949">
    <property type="entry name" value="DUF1292"/>
    <property type="match status" value="1"/>
</dbReference>
<sequence length="100" mass="11781">MAEEHNHNHEEENIIWITNEEGKEEAFEILFDFDSEDFDKSYVLYFPAGKSEDEEIEILASSYIQDEEGKQGQLKPVETDEEWDMIEEILATFLADEDEE</sequence>
<reference key="1">
    <citation type="journal article" date="2006" name="J. Bacteriol.">
        <title>Whole-genome sequence of Listeria welshimeri reveals common steps in genome reduction with Listeria innocua as compared to Listeria monocytogenes.</title>
        <authorList>
            <person name="Hain T."/>
            <person name="Steinweg C."/>
            <person name="Kuenne C.T."/>
            <person name="Billion A."/>
            <person name="Ghai R."/>
            <person name="Chatterjee S.S."/>
            <person name="Domann E."/>
            <person name="Kaerst U."/>
            <person name="Goesmann A."/>
            <person name="Bekel T."/>
            <person name="Bartels D."/>
            <person name="Kaiser O."/>
            <person name="Meyer F."/>
            <person name="Puehler A."/>
            <person name="Weisshaar B."/>
            <person name="Wehland J."/>
            <person name="Liang C."/>
            <person name="Dandekar T."/>
            <person name="Lampidis R."/>
            <person name="Kreft J."/>
            <person name="Goebel W."/>
            <person name="Chakraborty T."/>
        </authorList>
    </citation>
    <scope>NUCLEOTIDE SEQUENCE [LARGE SCALE GENOMIC DNA]</scope>
    <source>
        <strain>ATCC 35897 / DSM 20650 / CCUG 15529 / CIP 8149 / NCTC 11857 / SLCC 5334 / V8</strain>
    </source>
</reference>
<gene>
    <name type="ordered locus">lwe1514</name>
</gene>
<accession>A0AIV0</accession>
<comment type="similarity">
    <text evidence="1">Belongs to the UPF0473 family.</text>
</comment>
<proteinExistence type="inferred from homology"/>
<organism>
    <name type="scientific">Listeria welshimeri serovar 6b (strain ATCC 35897 / DSM 20650 / CCUG 15529 / CIP 8149 / NCTC 11857 / SLCC 5334 / V8)</name>
    <dbReference type="NCBI Taxonomy" id="386043"/>
    <lineage>
        <taxon>Bacteria</taxon>
        <taxon>Bacillati</taxon>
        <taxon>Bacillota</taxon>
        <taxon>Bacilli</taxon>
        <taxon>Bacillales</taxon>
        <taxon>Listeriaceae</taxon>
        <taxon>Listeria</taxon>
    </lineage>
</organism>
<protein>
    <recommendedName>
        <fullName evidence="1">UPF0473 protein lwe1514</fullName>
    </recommendedName>
</protein>
<feature type="chain" id="PRO_0000304849" description="UPF0473 protein lwe1514">
    <location>
        <begin position="1"/>
        <end position="100"/>
    </location>
</feature>
<name>Y1514_LISW6</name>